<dbReference type="EC" id="3.6.1.27" evidence="1"/>
<dbReference type="EMBL" id="CP000447">
    <property type="protein sequence ID" value="ABI72827.1"/>
    <property type="molecule type" value="Genomic_DNA"/>
</dbReference>
<dbReference type="RefSeq" id="WP_011638436.1">
    <property type="nucleotide sequence ID" value="NC_008345.1"/>
</dbReference>
<dbReference type="SMR" id="Q07YT7"/>
<dbReference type="STRING" id="318167.Sfri_2988"/>
<dbReference type="KEGG" id="sfr:Sfri_2988"/>
<dbReference type="eggNOG" id="COG1968">
    <property type="taxonomic scope" value="Bacteria"/>
</dbReference>
<dbReference type="HOGENOM" id="CLU_060296_1_0_6"/>
<dbReference type="OrthoDB" id="9808289at2"/>
<dbReference type="Proteomes" id="UP000000684">
    <property type="component" value="Chromosome"/>
</dbReference>
<dbReference type="GO" id="GO:0005886">
    <property type="term" value="C:plasma membrane"/>
    <property type="evidence" value="ECO:0007669"/>
    <property type="project" value="UniProtKB-SubCell"/>
</dbReference>
<dbReference type="GO" id="GO:0050380">
    <property type="term" value="F:undecaprenyl-diphosphatase activity"/>
    <property type="evidence" value="ECO:0007669"/>
    <property type="project" value="UniProtKB-UniRule"/>
</dbReference>
<dbReference type="GO" id="GO:0071555">
    <property type="term" value="P:cell wall organization"/>
    <property type="evidence" value="ECO:0007669"/>
    <property type="project" value="UniProtKB-KW"/>
</dbReference>
<dbReference type="GO" id="GO:0009252">
    <property type="term" value="P:peptidoglycan biosynthetic process"/>
    <property type="evidence" value="ECO:0007669"/>
    <property type="project" value="UniProtKB-KW"/>
</dbReference>
<dbReference type="GO" id="GO:0008360">
    <property type="term" value="P:regulation of cell shape"/>
    <property type="evidence" value="ECO:0007669"/>
    <property type="project" value="UniProtKB-KW"/>
</dbReference>
<dbReference type="GO" id="GO:0046677">
    <property type="term" value="P:response to antibiotic"/>
    <property type="evidence" value="ECO:0007669"/>
    <property type="project" value="UniProtKB-UniRule"/>
</dbReference>
<dbReference type="HAMAP" id="MF_01006">
    <property type="entry name" value="Undec_diphosphatase"/>
    <property type="match status" value="1"/>
</dbReference>
<dbReference type="InterPro" id="IPR003824">
    <property type="entry name" value="UppP"/>
</dbReference>
<dbReference type="NCBIfam" id="NF001393">
    <property type="entry name" value="PRK00281.2-4"/>
    <property type="match status" value="1"/>
</dbReference>
<dbReference type="NCBIfam" id="TIGR00753">
    <property type="entry name" value="undec_PP_bacA"/>
    <property type="match status" value="1"/>
</dbReference>
<dbReference type="PANTHER" id="PTHR30622">
    <property type="entry name" value="UNDECAPRENYL-DIPHOSPHATASE"/>
    <property type="match status" value="1"/>
</dbReference>
<dbReference type="PANTHER" id="PTHR30622:SF4">
    <property type="entry name" value="UNDECAPRENYL-DIPHOSPHATASE"/>
    <property type="match status" value="1"/>
</dbReference>
<dbReference type="Pfam" id="PF02673">
    <property type="entry name" value="BacA"/>
    <property type="match status" value="1"/>
</dbReference>
<evidence type="ECO:0000255" key="1">
    <source>
        <dbReference type="HAMAP-Rule" id="MF_01006"/>
    </source>
</evidence>
<organism>
    <name type="scientific">Shewanella frigidimarina (strain NCIMB 400)</name>
    <dbReference type="NCBI Taxonomy" id="318167"/>
    <lineage>
        <taxon>Bacteria</taxon>
        <taxon>Pseudomonadati</taxon>
        <taxon>Pseudomonadota</taxon>
        <taxon>Gammaproteobacteria</taxon>
        <taxon>Alteromonadales</taxon>
        <taxon>Shewanellaceae</taxon>
        <taxon>Shewanella</taxon>
    </lineage>
</organism>
<protein>
    <recommendedName>
        <fullName evidence="1">Undecaprenyl-diphosphatase</fullName>
        <ecNumber evidence="1">3.6.1.27</ecNumber>
    </recommendedName>
    <alternativeName>
        <fullName evidence="1">Bacitracin resistance protein</fullName>
    </alternativeName>
    <alternativeName>
        <fullName evidence="1">Undecaprenyl pyrophosphate phosphatase</fullName>
    </alternativeName>
</protein>
<name>UPPP_SHEFN</name>
<proteinExistence type="inferred from homology"/>
<accession>Q07YT7</accession>
<feature type="chain" id="PRO_0000290762" description="Undecaprenyl-diphosphatase">
    <location>
        <begin position="1"/>
        <end position="266"/>
    </location>
</feature>
<feature type="transmembrane region" description="Helical" evidence="1">
    <location>
        <begin position="1"/>
        <end position="21"/>
    </location>
</feature>
<feature type="transmembrane region" description="Helical" evidence="1">
    <location>
        <begin position="39"/>
        <end position="59"/>
    </location>
</feature>
<feature type="transmembrane region" description="Helical" evidence="1">
    <location>
        <begin position="87"/>
        <end position="107"/>
    </location>
</feature>
<feature type="transmembrane region" description="Helical" evidence="1">
    <location>
        <begin position="111"/>
        <end position="131"/>
    </location>
</feature>
<feature type="transmembrane region" description="Helical" evidence="1">
    <location>
        <begin position="144"/>
        <end position="164"/>
    </location>
</feature>
<feature type="transmembrane region" description="Helical" evidence="1">
    <location>
        <begin position="183"/>
        <end position="203"/>
    </location>
</feature>
<feature type="transmembrane region" description="Helical" evidence="1">
    <location>
        <begin position="218"/>
        <end position="238"/>
    </location>
</feature>
<feature type="transmembrane region" description="Helical" evidence="1">
    <location>
        <begin position="244"/>
        <end position="264"/>
    </location>
</feature>
<sequence>METFQVILLALIQGLTEFLPISSSAHLILPSQILGWADQGLSFDVAVNTGSLFAVVIYFRHEIVVLAKAWFTSLASKQQTQESKLAWWIILATIPAVIVGFTAKDFIETHFRNTLVIAITTIVFGLLLWAADRMSKAQLTEFQMGWKKALLIGLAQAMALIPGTSRSGATMTAALMLGLTRDAAARFSFLMSVPVSFGAALLVTKDLVSSPAPIDYQALGLGIVVSFVAAYLCIHFFLKFISKIGMTPFVLYRLALGAILLGLLYL</sequence>
<comment type="function">
    <text evidence="1">Catalyzes the dephosphorylation of undecaprenyl diphosphate (UPP). Confers resistance to bacitracin.</text>
</comment>
<comment type="catalytic activity">
    <reaction evidence="1">
        <text>di-trans,octa-cis-undecaprenyl diphosphate + H2O = di-trans,octa-cis-undecaprenyl phosphate + phosphate + H(+)</text>
        <dbReference type="Rhea" id="RHEA:28094"/>
        <dbReference type="ChEBI" id="CHEBI:15377"/>
        <dbReference type="ChEBI" id="CHEBI:15378"/>
        <dbReference type="ChEBI" id="CHEBI:43474"/>
        <dbReference type="ChEBI" id="CHEBI:58405"/>
        <dbReference type="ChEBI" id="CHEBI:60392"/>
        <dbReference type="EC" id="3.6.1.27"/>
    </reaction>
</comment>
<comment type="subcellular location">
    <subcellularLocation>
        <location evidence="1">Cell inner membrane</location>
        <topology evidence="1">Multi-pass membrane protein</topology>
    </subcellularLocation>
</comment>
<comment type="miscellaneous">
    <text>Bacitracin is thought to be involved in the inhibition of peptidoglycan synthesis by sequestering undecaprenyl diphosphate, thereby reducing the pool of lipid carrier available.</text>
</comment>
<comment type="similarity">
    <text evidence="1">Belongs to the UppP family.</text>
</comment>
<keyword id="KW-0046">Antibiotic resistance</keyword>
<keyword id="KW-0997">Cell inner membrane</keyword>
<keyword id="KW-1003">Cell membrane</keyword>
<keyword id="KW-0133">Cell shape</keyword>
<keyword id="KW-0961">Cell wall biogenesis/degradation</keyword>
<keyword id="KW-0378">Hydrolase</keyword>
<keyword id="KW-0472">Membrane</keyword>
<keyword id="KW-0573">Peptidoglycan synthesis</keyword>
<keyword id="KW-1185">Reference proteome</keyword>
<keyword id="KW-0812">Transmembrane</keyword>
<keyword id="KW-1133">Transmembrane helix</keyword>
<gene>
    <name evidence="1" type="primary">uppP</name>
    <name type="ordered locus">Sfri_2988</name>
</gene>
<reference key="1">
    <citation type="submission" date="2006-08" db="EMBL/GenBank/DDBJ databases">
        <title>Complete sequence of Shewanella frigidimarina NCIMB 400.</title>
        <authorList>
            <consortium name="US DOE Joint Genome Institute"/>
            <person name="Copeland A."/>
            <person name="Lucas S."/>
            <person name="Lapidus A."/>
            <person name="Barry K."/>
            <person name="Detter J.C."/>
            <person name="Glavina del Rio T."/>
            <person name="Hammon N."/>
            <person name="Israni S."/>
            <person name="Dalin E."/>
            <person name="Tice H."/>
            <person name="Pitluck S."/>
            <person name="Fredrickson J.K."/>
            <person name="Kolker E."/>
            <person name="McCuel L.A."/>
            <person name="DiChristina T."/>
            <person name="Nealson K.H."/>
            <person name="Newman D."/>
            <person name="Tiedje J.M."/>
            <person name="Zhou J."/>
            <person name="Romine M.F."/>
            <person name="Culley D.E."/>
            <person name="Serres M."/>
            <person name="Chertkov O."/>
            <person name="Brettin T."/>
            <person name="Bruce D."/>
            <person name="Han C."/>
            <person name="Tapia R."/>
            <person name="Gilna P."/>
            <person name="Schmutz J."/>
            <person name="Larimer F."/>
            <person name="Land M."/>
            <person name="Hauser L."/>
            <person name="Kyrpides N."/>
            <person name="Mikhailova N."/>
            <person name="Richardson P."/>
        </authorList>
    </citation>
    <scope>NUCLEOTIDE SEQUENCE [LARGE SCALE GENOMIC DNA]</scope>
    <source>
        <strain>NCIMB 400</strain>
    </source>
</reference>